<feature type="chain" id="PRO_1000066210" description="Orotate phosphoribosyltransferase">
    <location>
        <begin position="1"/>
        <end position="220"/>
    </location>
</feature>
<feature type="binding site" description="in other chain" evidence="1">
    <location>
        <position position="26"/>
    </location>
    <ligand>
        <name>5-phospho-alpha-D-ribose 1-diphosphate</name>
        <dbReference type="ChEBI" id="CHEBI:58017"/>
        <note>ligand shared between dimeric partners</note>
    </ligand>
</feature>
<feature type="binding site" evidence="1">
    <location>
        <begin position="34"/>
        <end position="35"/>
    </location>
    <ligand>
        <name>orotate</name>
        <dbReference type="ChEBI" id="CHEBI:30839"/>
    </ligand>
</feature>
<feature type="binding site" description="in other chain" evidence="1">
    <location>
        <begin position="72"/>
        <end position="73"/>
    </location>
    <ligand>
        <name>5-phospho-alpha-D-ribose 1-diphosphate</name>
        <dbReference type="ChEBI" id="CHEBI:58017"/>
        <note>ligand shared between dimeric partners</note>
    </ligand>
</feature>
<feature type="binding site" evidence="1">
    <location>
        <position position="101"/>
    </location>
    <ligand>
        <name>5-phospho-alpha-D-ribose 1-diphosphate</name>
        <dbReference type="ChEBI" id="CHEBI:58017"/>
        <note>ligand shared between dimeric partners</note>
    </ligand>
</feature>
<feature type="binding site" description="in other chain" evidence="1">
    <location>
        <position position="102"/>
    </location>
    <ligand>
        <name>5-phospho-alpha-D-ribose 1-diphosphate</name>
        <dbReference type="ChEBI" id="CHEBI:58017"/>
        <note>ligand shared between dimeric partners</note>
    </ligand>
</feature>
<feature type="binding site" evidence="1">
    <location>
        <position position="105"/>
    </location>
    <ligand>
        <name>5-phospho-alpha-D-ribose 1-diphosphate</name>
        <dbReference type="ChEBI" id="CHEBI:58017"/>
        <note>ligand shared between dimeric partners</note>
    </ligand>
</feature>
<feature type="binding site" evidence="1">
    <location>
        <position position="107"/>
    </location>
    <ligand>
        <name>5-phospho-alpha-D-ribose 1-diphosphate</name>
        <dbReference type="ChEBI" id="CHEBI:58017"/>
        <note>ligand shared between dimeric partners</note>
    </ligand>
</feature>
<feature type="binding site" description="in other chain" evidence="1">
    <location>
        <begin position="126"/>
        <end position="134"/>
    </location>
    <ligand>
        <name>5-phospho-alpha-D-ribose 1-diphosphate</name>
        <dbReference type="ChEBI" id="CHEBI:58017"/>
        <note>ligand shared between dimeric partners</note>
    </ligand>
</feature>
<feature type="binding site" evidence="1">
    <location>
        <position position="130"/>
    </location>
    <ligand>
        <name>orotate</name>
        <dbReference type="ChEBI" id="CHEBI:30839"/>
    </ligand>
</feature>
<feature type="binding site" evidence="1">
    <location>
        <position position="158"/>
    </location>
    <ligand>
        <name>orotate</name>
        <dbReference type="ChEBI" id="CHEBI:30839"/>
    </ligand>
</feature>
<name>PYRE_BORA1</name>
<evidence type="ECO:0000255" key="1">
    <source>
        <dbReference type="HAMAP-Rule" id="MF_01208"/>
    </source>
</evidence>
<keyword id="KW-0328">Glycosyltransferase</keyword>
<keyword id="KW-0460">Magnesium</keyword>
<keyword id="KW-0665">Pyrimidine biosynthesis</keyword>
<keyword id="KW-1185">Reference proteome</keyword>
<keyword id="KW-0808">Transferase</keyword>
<proteinExistence type="inferred from homology"/>
<organism>
    <name type="scientific">Bordetella avium (strain 197N)</name>
    <dbReference type="NCBI Taxonomy" id="360910"/>
    <lineage>
        <taxon>Bacteria</taxon>
        <taxon>Pseudomonadati</taxon>
        <taxon>Pseudomonadota</taxon>
        <taxon>Betaproteobacteria</taxon>
        <taxon>Burkholderiales</taxon>
        <taxon>Alcaligenaceae</taxon>
        <taxon>Bordetella</taxon>
    </lineage>
</organism>
<sequence>MSNTATDFVRFALDEGVLRFGSFKVKSGRMSPYFFNAGLFNSGRSVGKLAAFYAQALLDSGLNFDMLFGPAYKGIPLATATAVALAGHPQASGDIPFAYNRKEAKDHGEGGTLVGAPLAGRVVIIDDVITAGTSVRESVEIIRAAGAQPAAVLIAMDRMERAGPDEALSPHSAVQDVAKTYGIPVISIASLADILQLLQDDEQFAAHRDSVLAYREQYGV</sequence>
<protein>
    <recommendedName>
        <fullName evidence="1">Orotate phosphoribosyltransferase</fullName>
        <shortName evidence="1">OPRT</shortName>
        <shortName evidence="1">OPRTase</shortName>
        <ecNumber evidence="1">2.4.2.10</ecNumber>
    </recommendedName>
</protein>
<gene>
    <name evidence="1" type="primary">pyrE</name>
    <name type="ordered locus">BAV3180</name>
</gene>
<reference key="1">
    <citation type="journal article" date="2006" name="J. Bacteriol.">
        <title>Comparison of the genome sequence of the poultry pathogen Bordetella avium with those of B. bronchiseptica, B. pertussis, and B. parapertussis reveals extensive diversity in surface structures associated with host interaction.</title>
        <authorList>
            <person name="Sebaihia M."/>
            <person name="Preston A."/>
            <person name="Maskell D.J."/>
            <person name="Kuzmiak H."/>
            <person name="Connell T.D."/>
            <person name="King N.D."/>
            <person name="Orndorff P.E."/>
            <person name="Miyamoto D.M."/>
            <person name="Thomson N.R."/>
            <person name="Harris D."/>
            <person name="Goble A."/>
            <person name="Lord A."/>
            <person name="Murphy L."/>
            <person name="Quail M.A."/>
            <person name="Rutter S."/>
            <person name="Squares R."/>
            <person name="Squares S."/>
            <person name="Woodward J."/>
            <person name="Parkhill J."/>
            <person name="Temple L.M."/>
        </authorList>
    </citation>
    <scope>NUCLEOTIDE SEQUENCE [LARGE SCALE GENOMIC DNA]</scope>
    <source>
        <strain>197N</strain>
    </source>
</reference>
<accession>Q2KU70</accession>
<comment type="function">
    <text evidence="1">Catalyzes the transfer of a ribosyl phosphate group from 5-phosphoribose 1-diphosphate to orotate, leading to the formation of orotidine monophosphate (OMP).</text>
</comment>
<comment type="catalytic activity">
    <reaction evidence="1">
        <text>orotidine 5'-phosphate + diphosphate = orotate + 5-phospho-alpha-D-ribose 1-diphosphate</text>
        <dbReference type="Rhea" id="RHEA:10380"/>
        <dbReference type="ChEBI" id="CHEBI:30839"/>
        <dbReference type="ChEBI" id="CHEBI:33019"/>
        <dbReference type="ChEBI" id="CHEBI:57538"/>
        <dbReference type="ChEBI" id="CHEBI:58017"/>
        <dbReference type="EC" id="2.4.2.10"/>
    </reaction>
</comment>
<comment type="cofactor">
    <cofactor evidence="1">
        <name>Mg(2+)</name>
        <dbReference type="ChEBI" id="CHEBI:18420"/>
    </cofactor>
</comment>
<comment type="pathway">
    <text evidence="1">Pyrimidine metabolism; UMP biosynthesis via de novo pathway; UMP from orotate: step 1/2.</text>
</comment>
<comment type="subunit">
    <text evidence="1">Homodimer.</text>
</comment>
<comment type="similarity">
    <text evidence="1">Belongs to the purine/pyrimidine phosphoribosyltransferase family. PyrE subfamily.</text>
</comment>
<dbReference type="EC" id="2.4.2.10" evidence="1"/>
<dbReference type="EMBL" id="AM167904">
    <property type="protein sequence ID" value="CAJ50790.1"/>
    <property type="molecule type" value="Genomic_DNA"/>
</dbReference>
<dbReference type="RefSeq" id="WP_012418818.1">
    <property type="nucleotide sequence ID" value="NC_010645.1"/>
</dbReference>
<dbReference type="SMR" id="Q2KU70"/>
<dbReference type="STRING" id="360910.BAV3180"/>
<dbReference type="GeneID" id="92933563"/>
<dbReference type="KEGG" id="bav:BAV3180"/>
<dbReference type="eggNOG" id="COG0461">
    <property type="taxonomic scope" value="Bacteria"/>
</dbReference>
<dbReference type="HOGENOM" id="CLU_074878_0_1_4"/>
<dbReference type="OrthoDB" id="9779060at2"/>
<dbReference type="UniPathway" id="UPA00070">
    <property type="reaction ID" value="UER00119"/>
</dbReference>
<dbReference type="Proteomes" id="UP000001977">
    <property type="component" value="Chromosome"/>
</dbReference>
<dbReference type="GO" id="GO:0005737">
    <property type="term" value="C:cytoplasm"/>
    <property type="evidence" value="ECO:0007669"/>
    <property type="project" value="TreeGrafter"/>
</dbReference>
<dbReference type="GO" id="GO:0000287">
    <property type="term" value="F:magnesium ion binding"/>
    <property type="evidence" value="ECO:0007669"/>
    <property type="project" value="UniProtKB-UniRule"/>
</dbReference>
<dbReference type="GO" id="GO:0004588">
    <property type="term" value="F:orotate phosphoribosyltransferase activity"/>
    <property type="evidence" value="ECO:0007669"/>
    <property type="project" value="UniProtKB-UniRule"/>
</dbReference>
<dbReference type="GO" id="GO:0006207">
    <property type="term" value="P:'de novo' pyrimidine nucleobase biosynthetic process"/>
    <property type="evidence" value="ECO:0007669"/>
    <property type="project" value="TreeGrafter"/>
</dbReference>
<dbReference type="GO" id="GO:0044205">
    <property type="term" value="P:'de novo' UMP biosynthetic process"/>
    <property type="evidence" value="ECO:0007669"/>
    <property type="project" value="UniProtKB-UniRule"/>
</dbReference>
<dbReference type="GO" id="GO:0046132">
    <property type="term" value="P:pyrimidine ribonucleoside biosynthetic process"/>
    <property type="evidence" value="ECO:0007669"/>
    <property type="project" value="TreeGrafter"/>
</dbReference>
<dbReference type="CDD" id="cd06223">
    <property type="entry name" value="PRTases_typeI"/>
    <property type="match status" value="1"/>
</dbReference>
<dbReference type="FunFam" id="3.40.50.2020:FF:000008">
    <property type="entry name" value="Orotate phosphoribosyltransferase"/>
    <property type="match status" value="1"/>
</dbReference>
<dbReference type="Gene3D" id="3.40.50.2020">
    <property type="match status" value="1"/>
</dbReference>
<dbReference type="HAMAP" id="MF_01208">
    <property type="entry name" value="PyrE"/>
    <property type="match status" value="1"/>
</dbReference>
<dbReference type="InterPro" id="IPR023031">
    <property type="entry name" value="OPRT"/>
</dbReference>
<dbReference type="InterPro" id="IPR004467">
    <property type="entry name" value="Or_phspho_trans_dom"/>
</dbReference>
<dbReference type="InterPro" id="IPR000836">
    <property type="entry name" value="PRibTrfase_dom"/>
</dbReference>
<dbReference type="InterPro" id="IPR029057">
    <property type="entry name" value="PRTase-like"/>
</dbReference>
<dbReference type="NCBIfam" id="TIGR00336">
    <property type="entry name" value="pyrE"/>
    <property type="match status" value="1"/>
</dbReference>
<dbReference type="PANTHER" id="PTHR46683">
    <property type="entry name" value="OROTATE PHOSPHORIBOSYLTRANSFERASE 1-RELATED"/>
    <property type="match status" value="1"/>
</dbReference>
<dbReference type="PANTHER" id="PTHR46683:SF1">
    <property type="entry name" value="OROTATE PHOSPHORIBOSYLTRANSFERASE 1-RELATED"/>
    <property type="match status" value="1"/>
</dbReference>
<dbReference type="Pfam" id="PF00156">
    <property type="entry name" value="Pribosyltran"/>
    <property type="match status" value="1"/>
</dbReference>
<dbReference type="SUPFAM" id="SSF53271">
    <property type="entry name" value="PRTase-like"/>
    <property type="match status" value="1"/>
</dbReference>
<dbReference type="PROSITE" id="PS00103">
    <property type="entry name" value="PUR_PYR_PR_TRANSFER"/>
    <property type="match status" value="1"/>
</dbReference>